<organism>
    <name type="scientific">Arabidopsis thaliana</name>
    <name type="common">Mouse-ear cress</name>
    <dbReference type="NCBI Taxonomy" id="3702"/>
    <lineage>
        <taxon>Eukaryota</taxon>
        <taxon>Viridiplantae</taxon>
        <taxon>Streptophyta</taxon>
        <taxon>Embryophyta</taxon>
        <taxon>Tracheophyta</taxon>
        <taxon>Spermatophyta</taxon>
        <taxon>Magnoliopsida</taxon>
        <taxon>eudicotyledons</taxon>
        <taxon>Gunneridae</taxon>
        <taxon>Pentapetalae</taxon>
        <taxon>rosids</taxon>
        <taxon>malvids</taxon>
        <taxon>Brassicales</taxon>
        <taxon>Brassicaceae</taxon>
        <taxon>Camelineae</taxon>
        <taxon>Arabidopsis</taxon>
    </lineage>
</organism>
<dbReference type="EC" id="2.5.1.-" evidence="5 6"/>
<dbReference type="EC" id="2.5.1.10" evidence="5 6"/>
<dbReference type="EC" id="2.5.1.1" evidence="5 6"/>
<dbReference type="EC" id="2.5.1.29" evidence="5 6"/>
<dbReference type="EMBL" id="AC005724">
    <property type="protein sequence ID" value="AAD08933.1"/>
    <property type="molecule type" value="Genomic_DNA"/>
</dbReference>
<dbReference type="EMBL" id="AC006135">
    <property type="protein sequence ID" value="AAM15136.1"/>
    <property type="molecule type" value="Genomic_DNA"/>
</dbReference>
<dbReference type="EMBL" id="CP002685">
    <property type="protein sequence ID" value="AEC06788.1"/>
    <property type="molecule type" value="Genomic_DNA"/>
</dbReference>
<dbReference type="EMBL" id="DQ446521">
    <property type="protein sequence ID" value="ABE65826.1"/>
    <property type="molecule type" value="mRNA"/>
</dbReference>
<dbReference type="EMBL" id="L22347">
    <property type="protein sequence ID" value="AAA96328.1"/>
    <property type="molecule type" value="Genomic_DNA"/>
</dbReference>
<dbReference type="PIR" id="G84566">
    <property type="entry name" value="G84566"/>
</dbReference>
<dbReference type="RefSeq" id="NP_179454.1">
    <property type="nucleotide sequence ID" value="NM_127420.2"/>
</dbReference>
<dbReference type="SMR" id="Q9SLG2"/>
<dbReference type="BioGRID" id="1736">
    <property type="interactions" value="3"/>
</dbReference>
<dbReference type="FunCoup" id="Q9SLG2">
    <property type="interactions" value="17"/>
</dbReference>
<dbReference type="STRING" id="3702.Q9SLG2"/>
<dbReference type="iPTMnet" id="Q9SLG2"/>
<dbReference type="PaxDb" id="3702-AT2G18640.1"/>
<dbReference type="ProteomicsDB" id="221842"/>
<dbReference type="EnsemblPlants" id="AT2G18640.1">
    <property type="protein sequence ID" value="AT2G18640.1"/>
    <property type="gene ID" value="AT2G18640"/>
</dbReference>
<dbReference type="GeneID" id="816379"/>
<dbReference type="Gramene" id="AT2G18640.1">
    <property type="protein sequence ID" value="AT2G18640.1"/>
    <property type="gene ID" value="AT2G18640"/>
</dbReference>
<dbReference type="KEGG" id="ath:AT2G18640"/>
<dbReference type="Araport" id="AT2G18640"/>
<dbReference type="TAIR" id="AT2G18640">
    <property type="gene designation" value="GGPS4"/>
</dbReference>
<dbReference type="eggNOG" id="KOG0776">
    <property type="taxonomic scope" value="Eukaryota"/>
</dbReference>
<dbReference type="HOGENOM" id="CLU_014015_0_0_1"/>
<dbReference type="InParanoid" id="Q9SLG2"/>
<dbReference type="OMA" id="FKPYMIS"/>
<dbReference type="OrthoDB" id="6921389at2759"/>
<dbReference type="PhylomeDB" id="Q9SLG2"/>
<dbReference type="BioCyc" id="ARA:AT2G18640-MONOMER"/>
<dbReference type="BioCyc" id="MetaCyc:AT2G18640-MONOMER"/>
<dbReference type="UniPathway" id="UPA00259">
    <property type="reaction ID" value="UER00368"/>
</dbReference>
<dbReference type="UniPathway" id="UPA00260">
    <property type="reaction ID" value="UER00369"/>
</dbReference>
<dbReference type="UniPathway" id="UPA00389">
    <property type="reaction ID" value="UER00564"/>
</dbReference>
<dbReference type="PRO" id="PR:Q9SLG2"/>
<dbReference type="Proteomes" id="UP000006548">
    <property type="component" value="Chromosome 2"/>
</dbReference>
<dbReference type="ExpressionAtlas" id="Q9SLG2">
    <property type="expression patterns" value="baseline and differential"/>
</dbReference>
<dbReference type="GO" id="GO:0005783">
    <property type="term" value="C:endoplasmic reticulum"/>
    <property type="evidence" value="ECO:0000314"/>
    <property type="project" value="TAIR"/>
</dbReference>
<dbReference type="GO" id="GO:0004337">
    <property type="term" value="F:(2E,6E)-farnesyl diphosphate synthase activity"/>
    <property type="evidence" value="ECO:0007669"/>
    <property type="project" value="UniProtKB-EC"/>
</dbReference>
<dbReference type="GO" id="GO:0004161">
    <property type="term" value="F:dimethylallyltranstransferase activity"/>
    <property type="evidence" value="ECO:0007669"/>
    <property type="project" value="UniProtKB-EC"/>
</dbReference>
<dbReference type="GO" id="GO:0004311">
    <property type="term" value="F:geranylgeranyl diphosphate synthase activity"/>
    <property type="evidence" value="ECO:0000314"/>
    <property type="project" value="TAIR"/>
</dbReference>
<dbReference type="GO" id="GO:0046872">
    <property type="term" value="F:metal ion binding"/>
    <property type="evidence" value="ECO:0007669"/>
    <property type="project" value="UniProtKB-KW"/>
</dbReference>
<dbReference type="GO" id="GO:0016117">
    <property type="term" value="P:carotenoid biosynthetic process"/>
    <property type="evidence" value="ECO:0007669"/>
    <property type="project" value="UniProtKB-KW"/>
</dbReference>
<dbReference type="GO" id="GO:0045337">
    <property type="term" value="P:farnesyl diphosphate biosynthetic process"/>
    <property type="evidence" value="ECO:0007669"/>
    <property type="project" value="UniProtKB-UniPathway"/>
</dbReference>
<dbReference type="GO" id="GO:0033384">
    <property type="term" value="P:geranyl diphosphate biosynthetic process"/>
    <property type="evidence" value="ECO:0007669"/>
    <property type="project" value="UniProtKB-UniPathway"/>
</dbReference>
<dbReference type="GO" id="GO:0033386">
    <property type="term" value="P:geranylgeranyl diphosphate biosynthetic process"/>
    <property type="evidence" value="ECO:0007669"/>
    <property type="project" value="UniProtKB-UniPathway"/>
</dbReference>
<dbReference type="GO" id="GO:0008299">
    <property type="term" value="P:isoprenoid biosynthetic process"/>
    <property type="evidence" value="ECO:0000304"/>
    <property type="project" value="TAIR"/>
</dbReference>
<dbReference type="CDD" id="cd00685">
    <property type="entry name" value="Trans_IPPS_HT"/>
    <property type="match status" value="1"/>
</dbReference>
<dbReference type="FunFam" id="1.10.600.10:FF:000001">
    <property type="entry name" value="Geranylgeranyl diphosphate synthase"/>
    <property type="match status" value="1"/>
</dbReference>
<dbReference type="Gene3D" id="1.10.600.10">
    <property type="entry name" value="Farnesyl Diphosphate Synthase"/>
    <property type="match status" value="1"/>
</dbReference>
<dbReference type="InterPro" id="IPR008949">
    <property type="entry name" value="Isoprenoid_synthase_dom_sf"/>
</dbReference>
<dbReference type="InterPro" id="IPR000092">
    <property type="entry name" value="Polyprenyl_synt"/>
</dbReference>
<dbReference type="InterPro" id="IPR033749">
    <property type="entry name" value="Polyprenyl_synt_CS"/>
</dbReference>
<dbReference type="InterPro" id="IPR053378">
    <property type="entry name" value="Prenyl_diphosphate_synthase"/>
</dbReference>
<dbReference type="NCBIfam" id="NF045485">
    <property type="entry name" value="FPPsyn"/>
    <property type="match status" value="1"/>
</dbReference>
<dbReference type="PANTHER" id="PTHR43281">
    <property type="entry name" value="FARNESYL DIPHOSPHATE SYNTHASE"/>
    <property type="match status" value="1"/>
</dbReference>
<dbReference type="PANTHER" id="PTHR43281:SF17">
    <property type="entry name" value="GERANYLGERANYL PYROPHOSPHATE SYNTHASE 4"/>
    <property type="match status" value="1"/>
</dbReference>
<dbReference type="Pfam" id="PF00348">
    <property type="entry name" value="polyprenyl_synt"/>
    <property type="match status" value="1"/>
</dbReference>
<dbReference type="SFLD" id="SFLDS00005">
    <property type="entry name" value="Isoprenoid_Synthase_Type_I"/>
    <property type="match status" value="1"/>
</dbReference>
<dbReference type="SFLD" id="SFLDG01017">
    <property type="entry name" value="Polyprenyl_Transferase_Like"/>
    <property type="match status" value="1"/>
</dbReference>
<dbReference type="SUPFAM" id="SSF48576">
    <property type="entry name" value="Terpenoid synthases"/>
    <property type="match status" value="1"/>
</dbReference>
<dbReference type="PROSITE" id="PS00723">
    <property type="entry name" value="POLYPRENYL_SYNTHASE_1"/>
    <property type="match status" value="1"/>
</dbReference>
<dbReference type="PROSITE" id="PS00444">
    <property type="entry name" value="POLYPRENYL_SYNTHASE_2"/>
    <property type="match status" value="1"/>
</dbReference>
<reference key="1">
    <citation type="journal article" date="1999" name="Nature">
        <title>Sequence and analysis of chromosome 2 of the plant Arabidopsis thaliana.</title>
        <authorList>
            <person name="Lin X."/>
            <person name="Kaul S."/>
            <person name="Rounsley S.D."/>
            <person name="Shea T.P."/>
            <person name="Benito M.-I."/>
            <person name="Town C.D."/>
            <person name="Fujii C.Y."/>
            <person name="Mason T.M."/>
            <person name="Bowman C.L."/>
            <person name="Barnstead M.E."/>
            <person name="Feldblyum T.V."/>
            <person name="Buell C.R."/>
            <person name="Ketchum K.A."/>
            <person name="Lee J.J."/>
            <person name="Ronning C.M."/>
            <person name="Koo H.L."/>
            <person name="Moffat K.S."/>
            <person name="Cronin L.A."/>
            <person name="Shen M."/>
            <person name="Pai G."/>
            <person name="Van Aken S."/>
            <person name="Umayam L."/>
            <person name="Tallon L.J."/>
            <person name="Gill J.E."/>
            <person name="Adams M.D."/>
            <person name="Carrera A.J."/>
            <person name="Creasy T.H."/>
            <person name="Goodman H.M."/>
            <person name="Somerville C.R."/>
            <person name="Copenhaver G.P."/>
            <person name="Preuss D."/>
            <person name="Nierman W.C."/>
            <person name="White O."/>
            <person name="Eisen J.A."/>
            <person name="Salzberg S.L."/>
            <person name="Fraser C.M."/>
            <person name="Venter J.C."/>
        </authorList>
    </citation>
    <scope>NUCLEOTIDE SEQUENCE [LARGE SCALE GENOMIC DNA]</scope>
    <source>
        <strain>cv. Columbia</strain>
    </source>
</reference>
<reference key="2">
    <citation type="journal article" date="2017" name="Plant J.">
        <title>Araport11: a complete reannotation of the Arabidopsis thaliana reference genome.</title>
        <authorList>
            <person name="Cheng C.Y."/>
            <person name="Krishnakumar V."/>
            <person name="Chan A.P."/>
            <person name="Thibaud-Nissen F."/>
            <person name="Schobel S."/>
            <person name="Town C.D."/>
        </authorList>
    </citation>
    <scope>GENOME REANNOTATION</scope>
    <source>
        <strain>cv. Columbia</strain>
    </source>
</reference>
<reference key="3">
    <citation type="journal article" date="2006" name="Plant Biotechnol. J.">
        <title>Simultaneous high-throughput recombinational cloning of open reading frames in closed and open configurations.</title>
        <authorList>
            <person name="Underwood B.A."/>
            <person name="Vanderhaeghen R."/>
            <person name="Whitford R."/>
            <person name="Town C.D."/>
            <person name="Hilson P."/>
        </authorList>
    </citation>
    <scope>NUCLEOTIDE SEQUENCE [LARGE SCALE MRNA]</scope>
    <source>
        <strain>cv. Columbia</strain>
    </source>
</reference>
<reference key="4">
    <citation type="journal article" date="1994" name="Plant Physiol.">
        <title>Molecular biology of carotenoid biosynthesis in plants.</title>
        <authorList>
            <person name="Bartley G.E."/>
            <person name="Scolnik P.A."/>
            <person name="Giuliano G."/>
        </authorList>
    </citation>
    <scope>NUCLEOTIDE SEQUENCE [MRNA] OF 148-304</scope>
    <source>
        <strain>cv. Wassilewskija</strain>
    </source>
</reference>
<reference key="5">
    <citation type="journal article" date="2000" name="Plant Physiol.">
        <title>Five geranylgeranyl diphosphate synthases expressed in different organs are localized into three subcellular compartments in Arabidopsis.</title>
        <authorList>
            <person name="Okada K."/>
            <person name="Saito T."/>
            <person name="Nakagawa T."/>
            <person name="Kawamukai M."/>
            <person name="Kamiya Y."/>
        </authorList>
    </citation>
    <scope>FUNCTION</scope>
    <scope>CATALYTIC ACTIVITY</scope>
    <scope>SUBCELLULAR LOCATION</scope>
    <scope>TISSUE SPECIFICITY</scope>
</reference>
<reference key="6">
    <citation type="journal article" date="2013" name="Plant Mol. Biol.">
        <title>Characterization of the GGPP synthase gene family in Arabidopsis thaliana.</title>
        <authorList>
            <person name="Beck G."/>
            <person name="Coman D."/>
            <person name="Herren E."/>
            <person name="Ruiz-Sola M.A."/>
            <person name="Rodriguez-Concepcion M."/>
            <person name="Gruissem W."/>
            <person name="Vranova E."/>
        </authorList>
    </citation>
    <scope>FUNCTION</scope>
    <scope>CATALYTIC ACTIVITY</scope>
    <scope>SUBCELLULAR LOCATION</scope>
    <scope>TISSUE SPECIFICITY</scope>
</reference>
<evidence type="ECO:0000250" key="1"/>
<evidence type="ECO:0000250" key="2">
    <source>
        <dbReference type="UniProtKB" id="P14324"/>
    </source>
</evidence>
<evidence type="ECO:0000250" key="3">
    <source>
        <dbReference type="UniProtKB" id="Q12051"/>
    </source>
</evidence>
<evidence type="ECO:0000255" key="4"/>
<evidence type="ECO:0000269" key="5">
    <source>
    </source>
</evidence>
<evidence type="ECO:0000269" key="6">
    <source>
    </source>
</evidence>
<evidence type="ECO:0000303" key="7">
    <source>
    </source>
</evidence>
<evidence type="ECO:0000303" key="8">
    <source>
    </source>
</evidence>
<evidence type="ECO:0000305" key="9"/>
<evidence type="ECO:0000312" key="10">
    <source>
        <dbReference type="Araport" id="AT2G18640"/>
    </source>
</evidence>
<evidence type="ECO:0000312" key="11">
    <source>
        <dbReference type="EMBL" id="AAM15136.1"/>
    </source>
</evidence>
<accession>Q9SLG2</accession>
<accession>Q1PF45</accession>
<accession>Q39107</accession>
<sequence length="372" mass="40936">MEAQNIFLYLLIVFLSLHFVFTTLKGRLSPANTRRLIRLLHIPIKSPVAAAIFARKDTREFLDSSIKLVNEEDDFGFSFDFKPYMISKAETINRALDEAIPLIEPLNIHKAMRYAILAGGKRVRPILCLAACELVGGEERLAIQAACAVEMIHTMSLIKDDLPCMDNDDLRRGKPTTHKVFGESVAILSGGALLALAFEHLTEADVSSKKMVRAVKELAKSIGTKGLVAGQAKDLSSEGLEQNDVGLEDLEYIHVHKTGSLLEASAVIGAVIGGGTEKEIEKVRNFARCIGLLFQVVDDILDETKSSEELGKTAGKDKVAGKLTYPKVIGVEKSKEFVEKLKRDAREHLQGFDSDKVKPLIALTNFIANRNH</sequence>
<feature type="signal peptide" evidence="4">
    <location>
        <begin position="1"/>
        <end position="22"/>
    </location>
</feature>
<feature type="chain" id="PRO_0000045404" description="Geranylgeranyl pyrophosphate synthase 4">
    <location>
        <begin position="23"/>
        <end position="372"/>
    </location>
</feature>
<feature type="binding site" evidence="2">
    <location>
        <position position="121"/>
    </location>
    <ligand>
        <name>isopentenyl diphosphate</name>
        <dbReference type="ChEBI" id="CHEBI:128769"/>
    </ligand>
</feature>
<feature type="binding site" evidence="2">
    <location>
        <position position="124"/>
    </location>
    <ligand>
        <name>isopentenyl diphosphate</name>
        <dbReference type="ChEBI" id="CHEBI:128769"/>
    </ligand>
</feature>
<feature type="binding site" evidence="3">
    <location>
        <position position="153"/>
    </location>
    <ligand>
        <name>isopentenyl diphosphate</name>
        <dbReference type="ChEBI" id="CHEBI:128769"/>
    </ligand>
</feature>
<feature type="binding site" evidence="2">
    <location>
        <position position="160"/>
    </location>
    <ligand>
        <name>Mg(2+)</name>
        <dbReference type="ChEBI" id="CHEBI:18420"/>
        <label>1</label>
    </ligand>
</feature>
<feature type="binding site" evidence="2">
    <location>
        <position position="160"/>
    </location>
    <ligand>
        <name>Mg(2+)</name>
        <dbReference type="ChEBI" id="CHEBI:18420"/>
        <label>2</label>
    </ligand>
</feature>
<feature type="binding site" evidence="2">
    <location>
        <position position="166"/>
    </location>
    <ligand>
        <name>Mg(2+)</name>
        <dbReference type="ChEBI" id="CHEBI:18420"/>
        <label>1</label>
    </ligand>
</feature>
<feature type="binding site" evidence="2">
    <location>
        <position position="166"/>
    </location>
    <ligand>
        <name>Mg(2+)</name>
        <dbReference type="ChEBI" id="CHEBI:18420"/>
        <label>2</label>
    </ligand>
</feature>
<feature type="binding site" evidence="1">
    <location>
        <position position="171"/>
    </location>
    <ligand>
        <name>dimethylallyl diphosphate</name>
        <dbReference type="ChEBI" id="CHEBI:57623"/>
    </ligand>
</feature>
<feature type="binding site" evidence="2">
    <location>
        <position position="172"/>
    </location>
    <ligand>
        <name>isopentenyl diphosphate</name>
        <dbReference type="ChEBI" id="CHEBI:128769"/>
    </ligand>
</feature>
<feature type="binding site" evidence="1">
    <location>
        <position position="257"/>
    </location>
    <ligand>
        <name>dimethylallyl diphosphate</name>
        <dbReference type="ChEBI" id="CHEBI:57623"/>
    </ligand>
</feature>
<feature type="binding site" evidence="1">
    <location>
        <position position="258"/>
    </location>
    <ligand>
        <name>dimethylallyl diphosphate</name>
        <dbReference type="ChEBI" id="CHEBI:57623"/>
    </ligand>
</feature>
<feature type="binding site" evidence="1">
    <location>
        <position position="295"/>
    </location>
    <ligand>
        <name>dimethylallyl diphosphate</name>
        <dbReference type="ChEBI" id="CHEBI:57623"/>
    </ligand>
</feature>
<feature type="binding site" evidence="1">
    <location>
        <position position="312"/>
    </location>
    <ligand>
        <name>dimethylallyl diphosphate</name>
        <dbReference type="ChEBI" id="CHEBI:57623"/>
    </ligand>
</feature>
<feature type="binding site" evidence="1">
    <location>
        <position position="322"/>
    </location>
    <ligand>
        <name>dimethylallyl diphosphate</name>
        <dbReference type="ChEBI" id="CHEBI:57623"/>
    </ligand>
</feature>
<feature type="sequence conflict" description="In Ref. 4; AAA96328." evidence="9" ref="4">
    <original>I</original>
    <variation>M</variation>
    <location>
        <position position="152"/>
    </location>
</feature>
<feature type="sequence conflict" description="In Ref. 4; AAA96328." evidence="9" ref="4">
    <original>E</original>
    <variation>V</variation>
    <location>
        <position position="303"/>
    </location>
</feature>
<comment type="function">
    <text evidence="5 6">Catalyzes the trans-addition of the three molecules of isopentenyl diphosphate (IPP) onto dimethylallyl diphosphate (DMAPP) to form geranylgeranyl diphosphate.</text>
</comment>
<comment type="catalytic activity">
    <reaction evidence="5 6">
        <text>isopentenyl diphosphate + dimethylallyl diphosphate = (2E)-geranyl diphosphate + diphosphate</text>
        <dbReference type="Rhea" id="RHEA:22408"/>
        <dbReference type="ChEBI" id="CHEBI:33019"/>
        <dbReference type="ChEBI" id="CHEBI:57623"/>
        <dbReference type="ChEBI" id="CHEBI:58057"/>
        <dbReference type="ChEBI" id="CHEBI:128769"/>
        <dbReference type="EC" id="2.5.1.1"/>
    </reaction>
    <physiologicalReaction direction="left-to-right" evidence="5 6">
        <dbReference type="Rhea" id="RHEA:22409"/>
    </physiologicalReaction>
</comment>
<comment type="catalytic activity">
    <reaction evidence="5 6">
        <text>isopentenyl diphosphate + (2E)-geranyl diphosphate = (2E,6E)-farnesyl diphosphate + diphosphate</text>
        <dbReference type="Rhea" id="RHEA:19361"/>
        <dbReference type="ChEBI" id="CHEBI:33019"/>
        <dbReference type="ChEBI" id="CHEBI:58057"/>
        <dbReference type="ChEBI" id="CHEBI:128769"/>
        <dbReference type="ChEBI" id="CHEBI:175763"/>
        <dbReference type="EC" id="2.5.1.10"/>
    </reaction>
    <physiologicalReaction direction="left-to-right" evidence="5 6">
        <dbReference type="Rhea" id="RHEA:19362"/>
    </physiologicalReaction>
</comment>
<comment type="catalytic activity">
    <reaction evidence="5 6">
        <text>isopentenyl diphosphate + (2E,6E)-farnesyl diphosphate = (2E,6E,10E)-geranylgeranyl diphosphate + diphosphate</text>
        <dbReference type="Rhea" id="RHEA:17653"/>
        <dbReference type="ChEBI" id="CHEBI:33019"/>
        <dbReference type="ChEBI" id="CHEBI:58756"/>
        <dbReference type="ChEBI" id="CHEBI:128769"/>
        <dbReference type="ChEBI" id="CHEBI:175763"/>
        <dbReference type="EC" id="2.5.1.29"/>
    </reaction>
    <physiologicalReaction direction="left-to-right" evidence="5">
        <dbReference type="Rhea" id="RHEA:17654"/>
    </physiologicalReaction>
</comment>
<comment type="cofactor">
    <cofactor evidence="2">
        <name>Mg(2+)</name>
        <dbReference type="ChEBI" id="CHEBI:18420"/>
    </cofactor>
    <text evidence="2">Binds 2 Mg(2+) ions per subunit.</text>
</comment>
<comment type="pathway">
    <text evidence="9">Isoprenoid biosynthesis; farnesyl diphosphate biosynthesis; farnesyl diphosphate from geranyl diphosphate and isopentenyl diphosphate: step 1/1.</text>
</comment>
<comment type="pathway">
    <text evidence="9">Isoprenoid biosynthesis; geranyl diphosphate biosynthesis; geranyl diphosphate from dimethylallyl diphosphate and isopentenyl diphosphate: step 1/1.</text>
</comment>
<comment type="pathway">
    <text evidence="9">Isoprenoid biosynthesis; geranylgeranyl diphosphate biosynthesis; geranylgeranyl diphosphate from farnesyl diphosphate and isopentenyl diphosphate: step 1/1.</text>
</comment>
<comment type="subunit">
    <text evidence="1">Monomer.</text>
</comment>
<comment type="subcellular location">
    <subcellularLocation>
        <location evidence="5 6">Endoplasmic reticulum</location>
    </subcellularLocation>
</comment>
<comment type="tissue specificity">
    <text evidence="5 6">Faintly expressed in flowers (PubMed:10759500). Expressed in roots and siliques (PubMed:23729351).</text>
</comment>
<comment type="similarity">
    <text evidence="9">Belongs to the FPP/GGPP synthase family.</text>
</comment>
<protein>
    <recommendedName>
        <fullName evidence="7">Geranylgeranyl pyrophosphate synthase 4</fullName>
        <shortName evidence="7">GGPP synthase 4</shortName>
        <shortName evidence="7">GGPS4</shortName>
        <ecNumber evidence="5 6">2.5.1.-</ecNumber>
    </recommendedName>
    <alternativeName>
        <fullName evidence="9">(2E,6E)-farnesyl diphosphate synthase 4</fullName>
        <ecNumber evidence="5 6">2.5.1.10</ecNumber>
    </alternativeName>
    <alternativeName>
        <fullName evidence="9">Dimethylallyltranstransferase 4</fullName>
        <ecNumber evidence="5 6">2.5.1.1</ecNumber>
    </alternativeName>
    <alternativeName>
        <fullName evidence="9">Farnesyl diphosphate synthase 4</fullName>
    </alternativeName>
    <alternativeName>
        <fullName evidence="9">Farnesyltranstransferase 4</fullName>
    </alternativeName>
    <alternativeName>
        <fullName evidence="9">Geranylgeranyl diphosphate synthase 4</fullName>
        <ecNumber evidence="5 6">2.5.1.29</ecNumber>
    </alternativeName>
    <alternativeName>
        <fullName evidence="9">Geranyltranstransferase 4</fullName>
    </alternativeName>
</protein>
<proteinExistence type="evidence at protein level"/>
<gene>
    <name evidence="7" type="primary">GGPP4</name>
    <name evidence="8" type="synonym">GGPS3</name>
    <name evidence="10" type="ordered locus">At2g18640</name>
    <name evidence="11" type="ORF">F24H14.2</name>
</gene>
<name>GGPP4_ARATH</name>
<keyword id="KW-0125">Carotenoid biosynthesis</keyword>
<keyword id="KW-0256">Endoplasmic reticulum</keyword>
<keyword id="KW-0414">Isoprene biosynthesis</keyword>
<keyword id="KW-0460">Magnesium</keyword>
<keyword id="KW-0479">Metal-binding</keyword>
<keyword id="KW-1185">Reference proteome</keyword>
<keyword id="KW-0732">Signal</keyword>
<keyword id="KW-0808">Transferase</keyword>